<name>METK_XANOM</name>
<protein>
    <recommendedName>
        <fullName evidence="1">S-adenosylmethionine synthase</fullName>
        <shortName evidence="1">AdoMet synthase</shortName>
        <ecNumber evidence="1">2.5.1.6</ecNumber>
    </recommendedName>
    <alternativeName>
        <fullName evidence="1">MAT</fullName>
    </alternativeName>
    <alternativeName>
        <fullName evidence="1">Methionine adenosyltransferase</fullName>
    </alternativeName>
</protein>
<feature type="chain" id="PRO_0000241061" description="S-adenosylmethionine synthase">
    <location>
        <begin position="1"/>
        <end position="403"/>
    </location>
</feature>
<feature type="region of interest" description="Flexible loop" evidence="1">
    <location>
        <begin position="99"/>
        <end position="109"/>
    </location>
</feature>
<feature type="binding site" description="in other chain" evidence="1">
    <location>
        <position position="15"/>
    </location>
    <ligand>
        <name>ATP</name>
        <dbReference type="ChEBI" id="CHEBI:30616"/>
        <note>ligand shared between two neighboring subunits</note>
    </ligand>
</feature>
<feature type="binding site" evidence="1">
    <location>
        <position position="17"/>
    </location>
    <ligand>
        <name>Mg(2+)</name>
        <dbReference type="ChEBI" id="CHEBI:18420"/>
    </ligand>
</feature>
<feature type="binding site" evidence="1">
    <location>
        <position position="43"/>
    </location>
    <ligand>
        <name>K(+)</name>
        <dbReference type="ChEBI" id="CHEBI:29103"/>
    </ligand>
</feature>
<feature type="binding site" description="in other chain" evidence="1">
    <location>
        <position position="56"/>
    </location>
    <ligand>
        <name>L-methionine</name>
        <dbReference type="ChEBI" id="CHEBI:57844"/>
        <note>ligand shared between two neighboring subunits</note>
    </ligand>
</feature>
<feature type="binding site" description="in other chain" evidence="1">
    <location>
        <position position="99"/>
    </location>
    <ligand>
        <name>L-methionine</name>
        <dbReference type="ChEBI" id="CHEBI:57844"/>
        <note>ligand shared between two neighboring subunits</note>
    </ligand>
</feature>
<feature type="binding site" description="in other chain" evidence="1">
    <location>
        <begin position="166"/>
        <end position="168"/>
    </location>
    <ligand>
        <name>ATP</name>
        <dbReference type="ChEBI" id="CHEBI:30616"/>
        <note>ligand shared between two neighboring subunits</note>
    </ligand>
</feature>
<feature type="binding site" description="in other chain" evidence="1">
    <location>
        <begin position="232"/>
        <end position="233"/>
    </location>
    <ligand>
        <name>ATP</name>
        <dbReference type="ChEBI" id="CHEBI:30616"/>
        <note>ligand shared between two neighboring subunits</note>
    </ligand>
</feature>
<feature type="binding site" evidence="1">
    <location>
        <position position="241"/>
    </location>
    <ligand>
        <name>ATP</name>
        <dbReference type="ChEBI" id="CHEBI:30616"/>
        <note>ligand shared between two neighboring subunits</note>
    </ligand>
</feature>
<feature type="binding site" evidence="1">
    <location>
        <position position="241"/>
    </location>
    <ligand>
        <name>L-methionine</name>
        <dbReference type="ChEBI" id="CHEBI:57844"/>
        <note>ligand shared between two neighboring subunits</note>
    </ligand>
</feature>
<feature type="binding site" description="in other chain" evidence="1">
    <location>
        <begin position="247"/>
        <end position="248"/>
    </location>
    <ligand>
        <name>ATP</name>
        <dbReference type="ChEBI" id="CHEBI:30616"/>
        <note>ligand shared between two neighboring subunits</note>
    </ligand>
</feature>
<feature type="binding site" evidence="1">
    <location>
        <position position="264"/>
    </location>
    <ligand>
        <name>ATP</name>
        <dbReference type="ChEBI" id="CHEBI:30616"/>
        <note>ligand shared between two neighboring subunits</note>
    </ligand>
</feature>
<feature type="binding site" evidence="1">
    <location>
        <position position="268"/>
    </location>
    <ligand>
        <name>ATP</name>
        <dbReference type="ChEBI" id="CHEBI:30616"/>
        <note>ligand shared between two neighboring subunits</note>
    </ligand>
</feature>
<feature type="binding site" description="in other chain" evidence="1">
    <location>
        <position position="272"/>
    </location>
    <ligand>
        <name>L-methionine</name>
        <dbReference type="ChEBI" id="CHEBI:57844"/>
        <note>ligand shared between two neighboring subunits</note>
    </ligand>
</feature>
<organism>
    <name type="scientific">Xanthomonas oryzae pv. oryzae (strain MAFF 311018)</name>
    <dbReference type="NCBI Taxonomy" id="342109"/>
    <lineage>
        <taxon>Bacteria</taxon>
        <taxon>Pseudomonadati</taxon>
        <taxon>Pseudomonadota</taxon>
        <taxon>Gammaproteobacteria</taxon>
        <taxon>Lysobacterales</taxon>
        <taxon>Lysobacteraceae</taxon>
        <taxon>Xanthomonas</taxon>
    </lineage>
</organism>
<reference key="1">
    <citation type="journal article" date="2005" name="Jpn. Agric. Res. Q.">
        <title>Genome sequence of Xanthomonas oryzae pv. oryzae suggests contribution of large numbers of effector genes and insertion sequences to its race diversity.</title>
        <authorList>
            <person name="Ochiai H."/>
            <person name="Inoue Y."/>
            <person name="Takeya M."/>
            <person name="Sasaki A."/>
            <person name="Kaku H."/>
        </authorList>
    </citation>
    <scope>NUCLEOTIDE SEQUENCE [LARGE SCALE GENOMIC DNA]</scope>
    <source>
        <strain>MAFF 311018</strain>
    </source>
</reference>
<keyword id="KW-0067">ATP-binding</keyword>
<keyword id="KW-0963">Cytoplasm</keyword>
<keyword id="KW-0460">Magnesium</keyword>
<keyword id="KW-0479">Metal-binding</keyword>
<keyword id="KW-0547">Nucleotide-binding</keyword>
<keyword id="KW-0554">One-carbon metabolism</keyword>
<keyword id="KW-0630">Potassium</keyword>
<keyword id="KW-0808">Transferase</keyword>
<dbReference type="EC" id="2.5.1.6" evidence="1"/>
<dbReference type="EMBL" id="AP008229">
    <property type="protein sequence ID" value="BAE70326.1"/>
    <property type="molecule type" value="Genomic_DNA"/>
</dbReference>
<dbReference type="RefSeq" id="WP_005910819.1">
    <property type="nucleotide sequence ID" value="NC_007705.1"/>
</dbReference>
<dbReference type="SMR" id="Q2NZF1"/>
<dbReference type="GeneID" id="97509197"/>
<dbReference type="KEGG" id="xom:XOO3571"/>
<dbReference type="HOGENOM" id="CLU_041802_1_1_6"/>
<dbReference type="UniPathway" id="UPA00315">
    <property type="reaction ID" value="UER00080"/>
</dbReference>
<dbReference type="GO" id="GO:0005737">
    <property type="term" value="C:cytoplasm"/>
    <property type="evidence" value="ECO:0007669"/>
    <property type="project" value="UniProtKB-SubCell"/>
</dbReference>
<dbReference type="GO" id="GO:0005524">
    <property type="term" value="F:ATP binding"/>
    <property type="evidence" value="ECO:0007669"/>
    <property type="project" value="UniProtKB-UniRule"/>
</dbReference>
<dbReference type="GO" id="GO:0000287">
    <property type="term" value="F:magnesium ion binding"/>
    <property type="evidence" value="ECO:0007669"/>
    <property type="project" value="UniProtKB-UniRule"/>
</dbReference>
<dbReference type="GO" id="GO:0004478">
    <property type="term" value="F:methionine adenosyltransferase activity"/>
    <property type="evidence" value="ECO:0007669"/>
    <property type="project" value="UniProtKB-UniRule"/>
</dbReference>
<dbReference type="GO" id="GO:0006730">
    <property type="term" value="P:one-carbon metabolic process"/>
    <property type="evidence" value="ECO:0007669"/>
    <property type="project" value="UniProtKB-KW"/>
</dbReference>
<dbReference type="GO" id="GO:0006556">
    <property type="term" value="P:S-adenosylmethionine biosynthetic process"/>
    <property type="evidence" value="ECO:0007669"/>
    <property type="project" value="UniProtKB-UniRule"/>
</dbReference>
<dbReference type="CDD" id="cd18079">
    <property type="entry name" value="S-AdoMet_synt"/>
    <property type="match status" value="1"/>
</dbReference>
<dbReference type="FunFam" id="3.30.300.10:FF:000003">
    <property type="entry name" value="S-adenosylmethionine synthase"/>
    <property type="match status" value="1"/>
</dbReference>
<dbReference type="FunFam" id="3.30.300.10:FF:000004">
    <property type="entry name" value="S-adenosylmethionine synthase"/>
    <property type="match status" value="1"/>
</dbReference>
<dbReference type="Gene3D" id="3.30.300.10">
    <property type="match status" value="3"/>
</dbReference>
<dbReference type="HAMAP" id="MF_00086">
    <property type="entry name" value="S_AdoMet_synth1"/>
    <property type="match status" value="1"/>
</dbReference>
<dbReference type="InterPro" id="IPR022631">
    <property type="entry name" value="ADOMET_SYNTHASE_CS"/>
</dbReference>
<dbReference type="InterPro" id="IPR022630">
    <property type="entry name" value="S-AdoMet_synt_C"/>
</dbReference>
<dbReference type="InterPro" id="IPR022629">
    <property type="entry name" value="S-AdoMet_synt_central"/>
</dbReference>
<dbReference type="InterPro" id="IPR022628">
    <property type="entry name" value="S-AdoMet_synt_N"/>
</dbReference>
<dbReference type="InterPro" id="IPR002133">
    <property type="entry name" value="S-AdoMet_synthetase"/>
</dbReference>
<dbReference type="InterPro" id="IPR022636">
    <property type="entry name" value="S-AdoMet_synthetase_sfam"/>
</dbReference>
<dbReference type="NCBIfam" id="TIGR01034">
    <property type="entry name" value="metK"/>
    <property type="match status" value="1"/>
</dbReference>
<dbReference type="PANTHER" id="PTHR11964">
    <property type="entry name" value="S-ADENOSYLMETHIONINE SYNTHETASE"/>
    <property type="match status" value="1"/>
</dbReference>
<dbReference type="Pfam" id="PF02773">
    <property type="entry name" value="S-AdoMet_synt_C"/>
    <property type="match status" value="1"/>
</dbReference>
<dbReference type="Pfam" id="PF02772">
    <property type="entry name" value="S-AdoMet_synt_M"/>
    <property type="match status" value="1"/>
</dbReference>
<dbReference type="Pfam" id="PF00438">
    <property type="entry name" value="S-AdoMet_synt_N"/>
    <property type="match status" value="1"/>
</dbReference>
<dbReference type="PIRSF" id="PIRSF000497">
    <property type="entry name" value="MAT"/>
    <property type="match status" value="1"/>
</dbReference>
<dbReference type="SUPFAM" id="SSF55973">
    <property type="entry name" value="S-adenosylmethionine synthetase"/>
    <property type="match status" value="3"/>
</dbReference>
<dbReference type="PROSITE" id="PS00376">
    <property type="entry name" value="ADOMET_SYNTHASE_1"/>
    <property type="match status" value="1"/>
</dbReference>
<dbReference type="PROSITE" id="PS00377">
    <property type="entry name" value="ADOMET_SYNTHASE_2"/>
    <property type="match status" value="1"/>
</dbReference>
<accession>Q2NZF1</accession>
<proteinExistence type="inferred from homology"/>
<comment type="function">
    <text evidence="1">Catalyzes the formation of S-adenosylmethionine (AdoMet) from methionine and ATP. The overall synthetic reaction is composed of two sequential steps, AdoMet formation and the subsequent tripolyphosphate hydrolysis which occurs prior to release of AdoMet from the enzyme.</text>
</comment>
<comment type="catalytic activity">
    <reaction evidence="1">
        <text>L-methionine + ATP + H2O = S-adenosyl-L-methionine + phosphate + diphosphate</text>
        <dbReference type="Rhea" id="RHEA:21080"/>
        <dbReference type="ChEBI" id="CHEBI:15377"/>
        <dbReference type="ChEBI" id="CHEBI:30616"/>
        <dbReference type="ChEBI" id="CHEBI:33019"/>
        <dbReference type="ChEBI" id="CHEBI:43474"/>
        <dbReference type="ChEBI" id="CHEBI:57844"/>
        <dbReference type="ChEBI" id="CHEBI:59789"/>
        <dbReference type="EC" id="2.5.1.6"/>
    </reaction>
</comment>
<comment type="cofactor">
    <cofactor evidence="1">
        <name>Mg(2+)</name>
        <dbReference type="ChEBI" id="CHEBI:18420"/>
    </cofactor>
    <text evidence="1">Binds 2 divalent ions per subunit.</text>
</comment>
<comment type="cofactor">
    <cofactor evidence="1">
        <name>K(+)</name>
        <dbReference type="ChEBI" id="CHEBI:29103"/>
    </cofactor>
    <text evidence="1">Binds 1 potassium ion per subunit.</text>
</comment>
<comment type="pathway">
    <text evidence="1">Amino-acid biosynthesis; S-adenosyl-L-methionine biosynthesis; S-adenosyl-L-methionine from L-methionine: step 1/1.</text>
</comment>
<comment type="subunit">
    <text evidence="1">Homotetramer; dimer of dimers.</text>
</comment>
<comment type="subcellular location">
    <subcellularLocation>
        <location evidence="1">Cytoplasm</location>
    </subcellularLocation>
</comment>
<comment type="similarity">
    <text evidence="1">Belongs to the AdoMet synthase family.</text>
</comment>
<gene>
    <name evidence="1" type="primary">metK</name>
    <name type="ordered locus">XOO3571</name>
</gene>
<evidence type="ECO:0000255" key="1">
    <source>
        <dbReference type="HAMAP-Rule" id="MF_00086"/>
    </source>
</evidence>
<sequence length="403" mass="43663">MSSYLFTSESVSEGHPDKIADQISDAVLDAILAQDKRARVACETMVKTGVAIVAGEVTTSAWIDLEALTRKVILDIGYNSSDVGFDGETCGVLNLIGKQSPDINQGVDRKNPEQQGAGDQGLMFGYATNETDSFMPAAIHLSHRLVEQQAKIRKKKNSALSWLRPDAKSQVTLRYEDGVATAIDAVVLSTQHDPGVKQKDLIEAVREEILKPVLPAKWLHKGTKFHINPTGKFVIGGPVGDCGLTGRKIIVDTYGGWARHGGGAFSGKDPSKVDRSAAYAARYVAKNVVAAGLADRCEVQVSYAIGVAEPTSISVTTFGTGKIADEQIEKLIRKHFDLRPFGIIQMLDLIHPMYQQTASYGHFGRKPKDFTYTDGTGAQHSATSFSWEKTDRADALRAAAKLK</sequence>